<organism evidence="4">
    <name type="scientific">Odorrana ishikawae</name>
    <name type="common">Ishikawa's frog</name>
    <name type="synonym">Rana ishikawae</name>
    <dbReference type="NCBI Taxonomy" id="310659"/>
    <lineage>
        <taxon>Eukaryota</taxon>
        <taxon>Metazoa</taxon>
        <taxon>Chordata</taxon>
        <taxon>Craniata</taxon>
        <taxon>Vertebrata</taxon>
        <taxon>Euteleostomi</taxon>
        <taxon>Amphibia</taxon>
        <taxon>Batrachia</taxon>
        <taxon>Anura</taxon>
        <taxon>Neobatrachia</taxon>
        <taxon>Ranoidea</taxon>
        <taxon>Ranidae</taxon>
        <taxon>Odorrana</taxon>
    </lineage>
</organism>
<protein>
    <recommendedName>
        <fullName evidence="4">Brevinin-2ISa</fullName>
    </recommendedName>
</protein>
<dbReference type="EMBL" id="AB602055">
    <property type="protein sequence ID" value="BAK08585.1"/>
    <property type="molecule type" value="mRNA"/>
</dbReference>
<dbReference type="GO" id="GO:0005576">
    <property type="term" value="C:extracellular region"/>
    <property type="evidence" value="ECO:0000314"/>
    <property type="project" value="UniProtKB"/>
</dbReference>
<dbReference type="GO" id="GO:0050829">
    <property type="term" value="P:defense response to Gram-negative bacterium"/>
    <property type="evidence" value="ECO:0000314"/>
    <property type="project" value="UniProtKB"/>
</dbReference>
<dbReference type="GO" id="GO:0050830">
    <property type="term" value="P:defense response to Gram-positive bacterium"/>
    <property type="evidence" value="ECO:0000314"/>
    <property type="project" value="UniProtKB"/>
</dbReference>
<dbReference type="InterPro" id="IPR012521">
    <property type="entry name" value="Antimicrobial_frog_2"/>
</dbReference>
<dbReference type="InterPro" id="IPR004275">
    <property type="entry name" value="Frog_antimicrobial_propeptide"/>
</dbReference>
<dbReference type="Pfam" id="PF08023">
    <property type="entry name" value="Antimicrobial_2"/>
    <property type="match status" value="1"/>
</dbReference>
<dbReference type="Pfam" id="PF03032">
    <property type="entry name" value="FSAP_sig_propep"/>
    <property type="match status" value="1"/>
</dbReference>
<comment type="function">
    <text evidence="3">Has antimicrobial activity against Gram-negative bacterium E.coli ATCC 8739 (MIC=50 ug), against Gram positive bacteria S.aureus ATCC 6538 (MIC=12.5 ug), methicillin-resistant S.aureus ATCC 43300 (MIC=100 ug) and B.subtilis ATCC 6633 (MIC=12.5 ug). Has no activity against fungus C.albicans ATCC 90028.</text>
</comment>
<comment type="subcellular location">
    <subcellularLocation>
        <location evidence="5">Secreted</location>
    </subcellularLocation>
</comment>
<comment type="tissue specificity">
    <text evidence="5">Expressed by the skin glands.</text>
</comment>
<comment type="mass spectrometry"/>
<comment type="similarity">
    <text evidence="2">Belongs to the frog skin active peptide (FSAP) family. Brevinin subfamily.</text>
</comment>
<keyword id="KW-0878">Amphibian defense peptide</keyword>
<keyword id="KW-0044">Antibiotic</keyword>
<keyword id="KW-0929">Antimicrobial</keyword>
<keyword id="KW-0165">Cleavage on pair of basic residues</keyword>
<keyword id="KW-0903">Direct protein sequencing</keyword>
<keyword id="KW-1015">Disulfide bond</keyword>
<keyword id="KW-0964">Secreted</keyword>
<keyword id="KW-0732">Signal</keyword>
<evidence type="ECO:0000250" key="1">
    <source>
        <dbReference type="UniProtKB" id="P80398"/>
    </source>
</evidence>
<evidence type="ECO:0000255" key="2"/>
<evidence type="ECO:0000269" key="3">
    <source>
    </source>
</evidence>
<evidence type="ECO:0000303" key="4">
    <source>
    </source>
</evidence>
<evidence type="ECO:0000305" key="5">
    <source>
    </source>
</evidence>
<evidence type="ECO:0000312" key="6">
    <source>
        <dbReference type="EMBL" id="BAK08585.1"/>
    </source>
</evidence>
<feature type="signal peptide" evidence="2">
    <location>
        <begin position="1"/>
        <end position="22"/>
    </location>
</feature>
<feature type="propeptide" id="PRO_0000439601" description="Removed in mature form" evidence="5">
    <location>
        <begin position="23"/>
        <end position="41"/>
    </location>
</feature>
<feature type="peptide" id="PRO_0000439602" description="Brevinin-2ISa" evidence="3">
    <location>
        <begin position="44"/>
        <end position="76"/>
    </location>
</feature>
<feature type="disulfide bond" evidence="1">
    <location>
        <begin position="70"/>
        <end position="76"/>
    </location>
</feature>
<name>BR2A_ODOIS</name>
<reference evidence="6" key="1">
    <citation type="journal article" date="2011" name="Peptides">
        <title>Identification and characterization of antimicrobial peptides from the skin of the endangered frog Odorrana ishikawae.</title>
        <authorList>
            <person name="Iwakoshi-Ukena E."/>
            <person name="Ukena K."/>
            <person name="Okimoto A."/>
            <person name="Soga M."/>
            <person name="Okada G."/>
            <person name="Sano N."/>
            <person name="Fujii T."/>
            <person name="Sugawara Y."/>
            <person name="Sumida M."/>
        </authorList>
    </citation>
    <scope>NUCLEOTIDE SEQUENCE [MRNA]</scope>
    <scope>PROTEIN SEQUENCE OF 44-76</scope>
    <scope>FUNCTION</scope>
    <scope>SYNTHESIS</scope>
    <scope>MASS SPECTROMETRY</scope>
    <source>
        <tissue evidence="4">Skin</tissue>
    </source>
</reference>
<accession>F1T153</accession>
<proteinExistence type="evidence at protein level"/>
<sequence>MFNMKKSLLLLFFLGTISLSLCEEERDADEDDGVEMTEEEVKRSLLDTFKNLAVNAAKSAGVSVLNALSCKISRTC</sequence>